<protein>
    <recommendedName>
        <fullName evidence="1">ATP synthase subunit c</fullName>
    </recommendedName>
    <alternativeName>
        <fullName evidence="1">ATP synthase F(0) sector subunit c</fullName>
    </alternativeName>
    <alternativeName>
        <fullName evidence="1">F-type ATPase subunit c</fullName>
        <shortName evidence="1">F-ATPase subunit c</shortName>
    </alternativeName>
    <alternativeName>
        <fullName evidence="1">Lipid-binding protein</fullName>
    </alternativeName>
</protein>
<comment type="function">
    <text evidence="1">F(1)F(0) ATP synthase produces ATP from ADP in the presence of a proton or sodium gradient. F-type ATPases consist of two structural domains, F(1) containing the extramembraneous catalytic core and F(0) containing the membrane proton channel, linked together by a central stalk and a peripheral stalk. During catalysis, ATP synthesis in the catalytic domain of F(1) is coupled via a rotary mechanism of the central stalk subunits to proton translocation.</text>
</comment>
<comment type="function">
    <text evidence="1">Key component of the F(0) channel; it plays a direct role in translocation across the membrane. A homomeric c-ring of between 10-14 subunits forms the central stalk rotor element with the F(1) delta and epsilon subunits.</text>
</comment>
<comment type="subunit">
    <text evidence="1">F-type ATPases have 2 components, F(1) - the catalytic core - and F(0) - the membrane proton channel. F(1) has five subunits: alpha(3), beta(3), gamma(1), delta(1), epsilon(1). F(0) has three main subunits: a(1), b(2) and c(10-14). The alpha and beta chains form an alternating ring which encloses part of the gamma chain. F(1) is attached to F(0) by a central stalk formed by the gamma and epsilon chains, while a peripheral stalk is formed by the delta and b chains.</text>
</comment>
<comment type="subcellular location">
    <subcellularLocation>
        <location evidence="1">Cell inner membrane</location>
        <topology evidence="1">Multi-pass membrane protein</topology>
    </subcellularLocation>
</comment>
<comment type="similarity">
    <text evidence="1">Belongs to the ATPase C chain family.</text>
</comment>
<reference key="1">
    <citation type="submission" date="2008-08" db="EMBL/GenBank/DDBJ databases">
        <title>Complete sequence of Acidithiobacillus ferrooxidans ATCC 53993.</title>
        <authorList>
            <person name="Lucas S."/>
            <person name="Copeland A."/>
            <person name="Lapidus A."/>
            <person name="Glavina del Rio T."/>
            <person name="Dalin E."/>
            <person name="Tice H."/>
            <person name="Bruce D."/>
            <person name="Goodwin L."/>
            <person name="Pitluck S."/>
            <person name="Sims D."/>
            <person name="Brettin T."/>
            <person name="Detter J.C."/>
            <person name="Han C."/>
            <person name="Kuske C.R."/>
            <person name="Larimer F."/>
            <person name="Land M."/>
            <person name="Hauser L."/>
            <person name="Kyrpides N."/>
            <person name="Lykidis A."/>
            <person name="Borole A.P."/>
        </authorList>
    </citation>
    <scope>NUCLEOTIDE SEQUENCE [LARGE SCALE GENOMIC DNA]</scope>
    <source>
        <strain>ATCC 53993 / BNL-5-31</strain>
    </source>
</reference>
<name>ATPL_ACIF5</name>
<organism>
    <name type="scientific">Acidithiobacillus ferrooxidans (strain ATCC 53993 / BNL-5-31)</name>
    <name type="common">Leptospirillum ferrooxidans (ATCC 53993)</name>
    <dbReference type="NCBI Taxonomy" id="380394"/>
    <lineage>
        <taxon>Bacteria</taxon>
        <taxon>Pseudomonadati</taxon>
        <taxon>Pseudomonadota</taxon>
        <taxon>Acidithiobacillia</taxon>
        <taxon>Acidithiobacillales</taxon>
        <taxon>Acidithiobacillaceae</taxon>
        <taxon>Acidithiobacillus</taxon>
    </lineage>
</organism>
<keyword id="KW-0066">ATP synthesis</keyword>
<keyword id="KW-0997">Cell inner membrane</keyword>
<keyword id="KW-1003">Cell membrane</keyword>
<keyword id="KW-0138">CF(0)</keyword>
<keyword id="KW-0375">Hydrogen ion transport</keyword>
<keyword id="KW-0406">Ion transport</keyword>
<keyword id="KW-0446">Lipid-binding</keyword>
<keyword id="KW-0472">Membrane</keyword>
<keyword id="KW-0812">Transmembrane</keyword>
<keyword id="KW-1133">Transmembrane helix</keyword>
<keyword id="KW-0813">Transport</keyword>
<feature type="chain" id="PRO_1000184308" description="ATP synthase subunit c">
    <location>
        <begin position="1"/>
        <end position="84"/>
    </location>
</feature>
<feature type="transmembrane region" description="Helical" evidence="1">
    <location>
        <begin position="13"/>
        <end position="33"/>
    </location>
</feature>
<feature type="transmembrane region" description="Helical" evidence="1">
    <location>
        <begin position="56"/>
        <end position="76"/>
    </location>
</feature>
<feature type="site" description="Reversibly protonated during proton transport" evidence="1">
    <location>
        <position position="63"/>
    </location>
</feature>
<evidence type="ECO:0000255" key="1">
    <source>
        <dbReference type="HAMAP-Rule" id="MF_01396"/>
    </source>
</evidence>
<gene>
    <name evidence="1" type="primary">atpE</name>
    <name type="ordered locus">Lferr_2812</name>
</gene>
<proteinExistence type="inferred from homology"/>
<accession>B5ER47</accession>
<sequence>MDAHTIIVAATAIAVGIIFGAAGLGSAIGWGLITSKTIEGITRQPEMRPQLLVNTFIFAGLMESFPFIILAFGFWFLFANPFLG</sequence>
<dbReference type="EMBL" id="CP001132">
    <property type="protein sequence ID" value="ACH84998.1"/>
    <property type="molecule type" value="Genomic_DNA"/>
</dbReference>
<dbReference type="RefSeq" id="WP_009561114.1">
    <property type="nucleotide sequence ID" value="NC_011206.1"/>
</dbReference>
<dbReference type="SMR" id="B5ER47"/>
<dbReference type="GeneID" id="65282192"/>
<dbReference type="KEGG" id="afe:Lferr_2812"/>
<dbReference type="eggNOG" id="ENOG5032S3K">
    <property type="taxonomic scope" value="Bacteria"/>
</dbReference>
<dbReference type="HOGENOM" id="CLU_148047_1_0_6"/>
<dbReference type="GO" id="GO:0005886">
    <property type="term" value="C:plasma membrane"/>
    <property type="evidence" value="ECO:0007669"/>
    <property type="project" value="UniProtKB-SubCell"/>
</dbReference>
<dbReference type="GO" id="GO:0045259">
    <property type="term" value="C:proton-transporting ATP synthase complex"/>
    <property type="evidence" value="ECO:0007669"/>
    <property type="project" value="UniProtKB-KW"/>
</dbReference>
<dbReference type="GO" id="GO:0033177">
    <property type="term" value="C:proton-transporting two-sector ATPase complex, proton-transporting domain"/>
    <property type="evidence" value="ECO:0007669"/>
    <property type="project" value="InterPro"/>
</dbReference>
<dbReference type="GO" id="GO:0008289">
    <property type="term" value="F:lipid binding"/>
    <property type="evidence" value="ECO:0007669"/>
    <property type="project" value="UniProtKB-KW"/>
</dbReference>
<dbReference type="GO" id="GO:0046933">
    <property type="term" value="F:proton-transporting ATP synthase activity, rotational mechanism"/>
    <property type="evidence" value="ECO:0007669"/>
    <property type="project" value="UniProtKB-UniRule"/>
</dbReference>
<dbReference type="CDD" id="cd18185">
    <property type="entry name" value="ATP-synt_Fo_c_ATPE"/>
    <property type="match status" value="1"/>
</dbReference>
<dbReference type="FunFam" id="1.20.20.10:FF:000002">
    <property type="entry name" value="ATP synthase subunit c"/>
    <property type="match status" value="1"/>
</dbReference>
<dbReference type="Gene3D" id="1.20.20.10">
    <property type="entry name" value="F1F0 ATP synthase subunit C"/>
    <property type="match status" value="1"/>
</dbReference>
<dbReference type="HAMAP" id="MF_01396">
    <property type="entry name" value="ATP_synth_c_bact"/>
    <property type="match status" value="1"/>
</dbReference>
<dbReference type="InterPro" id="IPR005953">
    <property type="entry name" value="ATP_synth_csu_bac/chlpt"/>
</dbReference>
<dbReference type="InterPro" id="IPR000454">
    <property type="entry name" value="ATP_synth_F0_csu"/>
</dbReference>
<dbReference type="InterPro" id="IPR020537">
    <property type="entry name" value="ATP_synth_F0_csu_DDCD_BS"/>
</dbReference>
<dbReference type="InterPro" id="IPR038662">
    <property type="entry name" value="ATP_synth_F0_csu_sf"/>
</dbReference>
<dbReference type="InterPro" id="IPR002379">
    <property type="entry name" value="ATPase_proteolipid_c-like_dom"/>
</dbReference>
<dbReference type="InterPro" id="IPR035921">
    <property type="entry name" value="F/V-ATP_Csub_sf"/>
</dbReference>
<dbReference type="NCBIfam" id="TIGR01260">
    <property type="entry name" value="ATP_synt_c"/>
    <property type="match status" value="1"/>
</dbReference>
<dbReference type="NCBIfam" id="NF005363">
    <property type="entry name" value="PRK06876.1"/>
    <property type="match status" value="1"/>
</dbReference>
<dbReference type="Pfam" id="PF00137">
    <property type="entry name" value="ATP-synt_C"/>
    <property type="match status" value="1"/>
</dbReference>
<dbReference type="SUPFAM" id="SSF81333">
    <property type="entry name" value="F1F0 ATP synthase subunit C"/>
    <property type="match status" value="1"/>
</dbReference>
<dbReference type="PROSITE" id="PS00605">
    <property type="entry name" value="ATPASE_C"/>
    <property type="match status" value="1"/>
</dbReference>